<proteinExistence type="inferred from homology"/>
<protein>
    <recommendedName>
        <fullName evidence="1">ADP-L-glycero-D-manno-heptose-6-epimerase</fullName>
        <ecNumber evidence="1">5.1.3.20</ecNumber>
    </recommendedName>
    <alternativeName>
        <fullName evidence="1">ADP-L-glycero-beta-D-manno-heptose-6-epimerase</fullName>
        <shortName evidence="1">ADP-glyceromanno-heptose 6-epimerase</shortName>
        <shortName evidence="1">ADP-hep 6-epimerase</shortName>
        <shortName evidence="1">AGME</shortName>
    </alternativeName>
</protein>
<evidence type="ECO:0000255" key="1">
    <source>
        <dbReference type="HAMAP-Rule" id="MF_01601"/>
    </source>
</evidence>
<dbReference type="EC" id="5.1.3.20" evidence="1"/>
<dbReference type="EMBL" id="BA000037">
    <property type="protein sequence ID" value="BAC93091.1"/>
    <property type="molecule type" value="Genomic_DNA"/>
</dbReference>
<dbReference type="RefSeq" id="WP_011149300.1">
    <property type="nucleotide sequence ID" value="NC_005139.1"/>
</dbReference>
<dbReference type="SMR" id="Q7MPN6"/>
<dbReference type="STRING" id="672.VV93_v1c03130"/>
<dbReference type="KEGG" id="vvy:VV0327"/>
<dbReference type="PATRIC" id="fig|196600.6.peg.360"/>
<dbReference type="eggNOG" id="COG0451">
    <property type="taxonomic scope" value="Bacteria"/>
</dbReference>
<dbReference type="HOGENOM" id="CLU_007383_1_3_6"/>
<dbReference type="UniPathway" id="UPA00356">
    <property type="reaction ID" value="UER00440"/>
</dbReference>
<dbReference type="UniPathway" id="UPA00958"/>
<dbReference type="Proteomes" id="UP000002675">
    <property type="component" value="Chromosome I"/>
</dbReference>
<dbReference type="GO" id="GO:0008712">
    <property type="term" value="F:ADP-glyceromanno-heptose 6-epimerase activity"/>
    <property type="evidence" value="ECO:0007669"/>
    <property type="project" value="UniProtKB-UniRule"/>
</dbReference>
<dbReference type="GO" id="GO:0050661">
    <property type="term" value="F:NADP binding"/>
    <property type="evidence" value="ECO:0007669"/>
    <property type="project" value="InterPro"/>
</dbReference>
<dbReference type="GO" id="GO:0097171">
    <property type="term" value="P:ADP-L-glycero-beta-D-manno-heptose biosynthetic process"/>
    <property type="evidence" value="ECO:0007669"/>
    <property type="project" value="UniProtKB-UniPathway"/>
</dbReference>
<dbReference type="GO" id="GO:0009244">
    <property type="term" value="P:lipopolysaccharide core region biosynthetic process"/>
    <property type="evidence" value="ECO:0007669"/>
    <property type="project" value="UniProtKB-UniPathway"/>
</dbReference>
<dbReference type="CDD" id="cd05248">
    <property type="entry name" value="ADP_GME_SDR_e"/>
    <property type="match status" value="1"/>
</dbReference>
<dbReference type="Gene3D" id="3.40.50.720">
    <property type="entry name" value="NAD(P)-binding Rossmann-like Domain"/>
    <property type="match status" value="1"/>
</dbReference>
<dbReference type="Gene3D" id="3.90.25.10">
    <property type="entry name" value="UDP-galactose 4-epimerase, domain 1"/>
    <property type="match status" value="1"/>
</dbReference>
<dbReference type="HAMAP" id="MF_01601">
    <property type="entry name" value="Heptose_epimerase"/>
    <property type="match status" value="1"/>
</dbReference>
<dbReference type="InterPro" id="IPR001509">
    <property type="entry name" value="Epimerase_deHydtase"/>
</dbReference>
<dbReference type="InterPro" id="IPR011912">
    <property type="entry name" value="Heptose_epim"/>
</dbReference>
<dbReference type="InterPro" id="IPR036291">
    <property type="entry name" value="NAD(P)-bd_dom_sf"/>
</dbReference>
<dbReference type="NCBIfam" id="TIGR02197">
    <property type="entry name" value="heptose_epim"/>
    <property type="match status" value="1"/>
</dbReference>
<dbReference type="NCBIfam" id="NF008360">
    <property type="entry name" value="PRK11150.1"/>
    <property type="match status" value="1"/>
</dbReference>
<dbReference type="PANTHER" id="PTHR43103:SF3">
    <property type="entry name" value="ADP-L-GLYCERO-D-MANNO-HEPTOSE-6-EPIMERASE"/>
    <property type="match status" value="1"/>
</dbReference>
<dbReference type="PANTHER" id="PTHR43103">
    <property type="entry name" value="NUCLEOSIDE-DIPHOSPHATE-SUGAR EPIMERASE"/>
    <property type="match status" value="1"/>
</dbReference>
<dbReference type="Pfam" id="PF01370">
    <property type="entry name" value="Epimerase"/>
    <property type="match status" value="1"/>
</dbReference>
<dbReference type="SUPFAM" id="SSF51735">
    <property type="entry name" value="NAD(P)-binding Rossmann-fold domains"/>
    <property type="match status" value="1"/>
</dbReference>
<keyword id="KW-0119">Carbohydrate metabolism</keyword>
<keyword id="KW-0413">Isomerase</keyword>
<keyword id="KW-0521">NADP</keyword>
<reference key="1">
    <citation type="journal article" date="2003" name="Genome Res.">
        <title>Comparative genome analysis of Vibrio vulnificus, a marine pathogen.</title>
        <authorList>
            <person name="Chen C.-Y."/>
            <person name="Wu K.-M."/>
            <person name="Chang Y.-C."/>
            <person name="Chang C.-H."/>
            <person name="Tsai H.-C."/>
            <person name="Liao T.-L."/>
            <person name="Liu Y.-M."/>
            <person name="Chen H.-J."/>
            <person name="Shen A.B.-T."/>
            <person name="Li J.-C."/>
            <person name="Su T.-L."/>
            <person name="Shao C.-P."/>
            <person name="Lee C.-T."/>
            <person name="Hor L.-I."/>
            <person name="Tsai S.-F."/>
        </authorList>
    </citation>
    <scope>NUCLEOTIDE SEQUENCE [LARGE SCALE GENOMIC DNA]</scope>
    <source>
        <strain>YJ016</strain>
    </source>
</reference>
<organism>
    <name type="scientific">Vibrio vulnificus (strain YJ016)</name>
    <dbReference type="NCBI Taxonomy" id="196600"/>
    <lineage>
        <taxon>Bacteria</taxon>
        <taxon>Pseudomonadati</taxon>
        <taxon>Pseudomonadota</taxon>
        <taxon>Gammaproteobacteria</taxon>
        <taxon>Vibrionales</taxon>
        <taxon>Vibrionaceae</taxon>
        <taxon>Vibrio</taxon>
    </lineage>
</organism>
<feature type="chain" id="PRO_0000205814" description="ADP-L-glycero-D-manno-heptose-6-epimerase">
    <location>
        <begin position="1"/>
        <end position="313"/>
    </location>
</feature>
<feature type="active site" description="Proton acceptor" evidence="1">
    <location>
        <position position="139"/>
    </location>
</feature>
<feature type="active site" description="Proton acceptor" evidence="1">
    <location>
        <position position="183"/>
    </location>
</feature>
<feature type="binding site" evidence="1">
    <location>
        <begin position="10"/>
        <end position="11"/>
    </location>
    <ligand>
        <name>NADP(+)</name>
        <dbReference type="ChEBI" id="CHEBI:58349"/>
    </ligand>
</feature>
<feature type="binding site" evidence="1">
    <location>
        <begin position="31"/>
        <end position="32"/>
    </location>
    <ligand>
        <name>NADP(+)</name>
        <dbReference type="ChEBI" id="CHEBI:58349"/>
    </ligand>
</feature>
<feature type="binding site" evidence="1">
    <location>
        <position position="38"/>
    </location>
    <ligand>
        <name>NADP(+)</name>
        <dbReference type="ChEBI" id="CHEBI:58349"/>
    </ligand>
</feature>
<feature type="binding site" evidence="1">
    <location>
        <position position="53"/>
    </location>
    <ligand>
        <name>NADP(+)</name>
        <dbReference type="ChEBI" id="CHEBI:58349"/>
    </ligand>
</feature>
<feature type="binding site" evidence="1">
    <location>
        <begin position="75"/>
        <end position="79"/>
    </location>
    <ligand>
        <name>NADP(+)</name>
        <dbReference type="ChEBI" id="CHEBI:58349"/>
    </ligand>
</feature>
<feature type="binding site" evidence="1">
    <location>
        <position position="92"/>
    </location>
    <ligand>
        <name>NADP(+)</name>
        <dbReference type="ChEBI" id="CHEBI:58349"/>
    </ligand>
</feature>
<feature type="binding site" evidence="1">
    <location>
        <position position="143"/>
    </location>
    <ligand>
        <name>NADP(+)</name>
        <dbReference type="ChEBI" id="CHEBI:58349"/>
    </ligand>
</feature>
<feature type="binding site" evidence="1">
    <location>
        <position position="174"/>
    </location>
    <ligand>
        <name>substrate</name>
    </ligand>
</feature>
<feature type="binding site" evidence="1">
    <location>
        <position position="175"/>
    </location>
    <ligand>
        <name>NADP(+)</name>
        <dbReference type="ChEBI" id="CHEBI:58349"/>
    </ligand>
</feature>
<feature type="binding site" evidence="1">
    <location>
        <position position="183"/>
    </location>
    <ligand>
        <name>NADP(+)</name>
        <dbReference type="ChEBI" id="CHEBI:58349"/>
    </ligand>
</feature>
<feature type="binding site" evidence="1">
    <location>
        <position position="185"/>
    </location>
    <ligand>
        <name>substrate</name>
    </ligand>
</feature>
<feature type="binding site" evidence="1">
    <location>
        <position position="192"/>
    </location>
    <ligand>
        <name>substrate</name>
    </ligand>
</feature>
<feature type="binding site" evidence="1">
    <location>
        <begin position="206"/>
        <end position="209"/>
    </location>
    <ligand>
        <name>substrate</name>
    </ligand>
</feature>
<feature type="binding site" evidence="1">
    <location>
        <position position="214"/>
    </location>
    <ligand>
        <name>substrate</name>
    </ligand>
</feature>
<feature type="binding site" evidence="1">
    <location>
        <position position="277"/>
    </location>
    <ligand>
        <name>substrate</name>
    </ligand>
</feature>
<comment type="function">
    <text evidence="1">Catalyzes the interconversion between ADP-D-glycero-beta-D-manno-heptose and ADP-L-glycero-beta-D-manno-heptose via an epimerization at carbon 6 of the heptose.</text>
</comment>
<comment type="catalytic activity">
    <reaction evidence="1">
        <text>ADP-D-glycero-beta-D-manno-heptose = ADP-L-glycero-beta-D-manno-heptose</text>
        <dbReference type="Rhea" id="RHEA:17577"/>
        <dbReference type="ChEBI" id="CHEBI:59967"/>
        <dbReference type="ChEBI" id="CHEBI:61506"/>
        <dbReference type="EC" id="5.1.3.20"/>
    </reaction>
</comment>
<comment type="cofactor">
    <cofactor evidence="1">
        <name>NADP(+)</name>
        <dbReference type="ChEBI" id="CHEBI:58349"/>
    </cofactor>
    <text evidence="1">Binds 1 NADP(+) per subunit.</text>
</comment>
<comment type="pathway">
    <text evidence="1">Nucleotide-sugar biosynthesis; ADP-L-glycero-beta-D-manno-heptose biosynthesis; ADP-L-glycero-beta-D-manno-heptose from D-glycero-beta-D-manno-heptose 7-phosphate: step 4/4.</text>
</comment>
<comment type="pathway">
    <text>Bacterial outer membrane biogenesis; LPS core biosynthesis.</text>
</comment>
<comment type="subunit">
    <text evidence="1">Homopentamer.</text>
</comment>
<comment type="domain">
    <text evidence="1">Contains a large N-terminal NADP-binding domain, and a smaller C-terminal substrate-binding domain.</text>
</comment>
<comment type="similarity">
    <text evidence="1">Belongs to the NAD(P)-dependent epimerase/dehydratase family. HldD subfamily.</text>
</comment>
<accession>Q7MPN6</accession>
<name>HLDD_VIBVY</name>
<gene>
    <name evidence="1" type="primary">hldD</name>
    <name type="ordered locus">VV0327</name>
</gene>
<sequence>MIIVTGGAGMIGSNIVKALNEIGINDILVVDNLKNGRKFKNLVDLDITDYMDRDDFLTQIMAGDNFGPIEAVFHEGACSATTEWDGKYMMLNNYEYSKELLHYCLEREIPFLYASSAATYGETTVFKEEREYEGALNVYGYSKQQFDNYVRRLWQDAEEHGETLSQITGFRYFNVYGPREQHKGSMASVAFHLNNQILAGENPKLFAGSEQFKRDFIYVGDVCKVNLWFMQNGVSGIFNCGTGNAESFEEVAKAVIKHHGKGEIETIPFPEHLKGAYQEFTQADLTKLRAAGCDVEFKNVAEGVAEYMAIVNG</sequence>